<dbReference type="EC" id="2.1.1.199" evidence="1"/>
<dbReference type="EMBL" id="CP000949">
    <property type="protein sequence ID" value="ACA71441.1"/>
    <property type="molecule type" value="Genomic_DNA"/>
</dbReference>
<dbReference type="SMR" id="B1J1Y2"/>
<dbReference type="STRING" id="390235.PputW619_0936"/>
<dbReference type="KEGG" id="ppw:PputW619_0936"/>
<dbReference type="eggNOG" id="COG0275">
    <property type="taxonomic scope" value="Bacteria"/>
</dbReference>
<dbReference type="HOGENOM" id="CLU_038422_2_0_6"/>
<dbReference type="OrthoDB" id="9806637at2"/>
<dbReference type="GO" id="GO:0005737">
    <property type="term" value="C:cytoplasm"/>
    <property type="evidence" value="ECO:0007669"/>
    <property type="project" value="UniProtKB-SubCell"/>
</dbReference>
<dbReference type="GO" id="GO:0071424">
    <property type="term" value="F:rRNA (cytosine-N4-)-methyltransferase activity"/>
    <property type="evidence" value="ECO:0007669"/>
    <property type="project" value="UniProtKB-UniRule"/>
</dbReference>
<dbReference type="GO" id="GO:0070475">
    <property type="term" value="P:rRNA base methylation"/>
    <property type="evidence" value="ECO:0007669"/>
    <property type="project" value="UniProtKB-UniRule"/>
</dbReference>
<dbReference type="FunFam" id="1.10.150.170:FF:000003">
    <property type="entry name" value="Ribosomal RNA small subunit methyltransferase H"/>
    <property type="match status" value="1"/>
</dbReference>
<dbReference type="Gene3D" id="1.10.150.170">
    <property type="entry name" value="Putative methyltransferase TM0872, insert domain"/>
    <property type="match status" value="1"/>
</dbReference>
<dbReference type="Gene3D" id="3.40.50.150">
    <property type="entry name" value="Vaccinia Virus protein VP39"/>
    <property type="match status" value="1"/>
</dbReference>
<dbReference type="HAMAP" id="MF_01007">
    <property type="entry name" value="16SrRNA_methyltr_H"/>
    <property type="match status" value="1"/>
</dbReference>
<dbReference type="InterPro" id="IPR002903">
    <property type="entry name" value="RsmH"/>
</dbReference>
<dbReference type="InterPro" id="IPR023397">
    <property type="entry name" value="SAM-dep_MeTrfase_MraW_recog"/>
</dbReference>
<dbReference type="InterPro" id="IPR029063">
    <property type="entry name" value="SAM-dependent_MTases_sf"/>
</dbReference>
<dbReference type="NCBIfam" id="TIGR00006">
    <property type="entry name" value="16S rRNA (cytosine(1402)-N(4))-methyltransferase RsmH"/>
    <property type="match status" value="1"/>
</dbReference>
<dbReference type="PANTHER" id="PTHR11265:SF0">
    <property type="entry name" value="12S RRNA N4-METHYLCYTIDINE METHYLTRANSFERASE"/>
    <property type="match status" value="1"/>
</dbReference>
<dbReference type="PANTHER" id="PTHR11265">
    <property type="entry name" value="S-ADENOSYL-METHYLTRANSFERASE MRAW"/>
    <property type="match status" value="1"/>
</dbReference>
<dbReference type="Pfam" id="PF01795">
    <property type="entry name" value="Methyltransf_5"/>
    <property type="match status" value="1"/>
</dbReference>
<dbReference type="PIRSF" id="PIRSF004486">
    <property type="entry name" value="MraW"/>
    <property type="match status" value="1"/>
</dbReference>
<dbReference type="SUPFAM" id="SSF81799">
    <property type="entry name" value="Putative methyltransferase TM0872, insert domain"/>
    <property type="match status" value="1"/>
</dbReference>
<dbReference type="SUPFAM" id="SSF53335">
    <property type="entry name" value="S-adenosyl-L-methionine-dependent methyltransferases"/>
    <property type="match status" value="1"/>
</dbReference>
<comment type="function">
    <text evidence="1">Specifically methylates the N4 position of cytidine in position 1402 (C1402) of 16S rRNA.</text>
</comment>
<comment type="catalytic activity">
    <reaction evidence="1">
        <text>cytidine(1402) in 16S rRNA + S-adenosyl-L-methionine = N(4)-methylcytidine(1402) in 16S rRNA + S-adenosyl-L-homocysteine + H(+)</text>
        <dbReference type="Rhea" id="RHEA:42928"/>
        <dbReference type="Rhea" id="RHEA-COMP:10286"/>
        <dbReference type="Rhea" id="RHEA-COMP:10287"/>
        <dbReference type="ChEBI" id="CHEBI:15378"/>
        <dbReference type="ChEBI" id="CHEBI:57856"/>
        <dbReference type="ChEBI" id="CHEBI:59789"/>
        <dbReference type="ChEBI" id="CHEBI:74506"/>
        <dbReference type="ChEBI" id="CHEBI:82748"/>
        <dbReference type="EC" id="2.1.1.199"/>
    </reaction>
</comment>
<comment type="subcellular location">
    <subcellularLocation>
        <location evidence="1">Cytoplasm</location>
    </subcellularLocation>
</comment>
<comment type="similarity">
    <text evidence="1">Belongs to the methyltransferase superfamily. RsmH family.</text>
</comment>
<accession>B1J1Y2</accession>
<evidence type="ECO:0000255" key="1">
    <source>
        <dbReference type="HAMAP-Rule" id="MF_01007"/>
    </source>
</evidence>
<gene>
    <name evidence="1" type="primary">rsmH</name>
    <name type="synonym">mraW</name>
    <name type="ordered locus">PputW619_0936</name>
</gene>
<sequence>MTIDSGFNHITVLLDEAVEALALRADGCYLDGTFGRGGHSRLILSKLGPQGRLLGFDKDPQAIATGQALAAEDGRFVIVQRSFAELGAEVAERGLAGKVSGILLDLGVSSPQLDDPERGFSFLNDGPLDMRMNPDQGISAAEFIATAPVEEIARVFKEYGEERFAGRMARAVVERREKQPFTRTADLAEVLKVANPAWEKGKNPATRAFQGLRIHVNNELGDLEAGLEAALDALEVGGRLAVISFHSLEDRIVKLFMRKLVKGEADNLPRNLPVQHKVFEPKIRLIGKAQFASEAELKANPRSRSAVMRVAEKLR</sequence>
<organism>
    <name type="scientific">Pseudomonas putida (strain W619)</name>
    <dbReference type="NCBI Taxonomy" id="390235"/>
    <lineage>
        <taxon>Bacteria</taxon>
        <taxon>Pseudomonadati</taxon>
        <taxon>Pseudomonadota</taxon>
        <taxon>Gammaproteobacteria</taxon>
        <taxon>Pseudomonadales</taxon>
        <taxon>Pseudomonadaceae</taxon>
        <taxon>Pseudomonas</taxon>
    </lineage>
</organism>
<name>RSMH_PSEPW</name>
<proteinExistence type="inferred from homology"/>
<protein>
    <recommendedName>
        <fullName evidence="1">Ribosomal RNA small subunit methyltransferase H</fullName>
        <ecNumber evidence="1">2.1.1.199</ecNumber>
    </recommendedName>
    <alternativeName>
        <fullName evidence="1">16S rRNA m(4)C1402 methyltransferase</fullName>
    </alternativeName>
    <alternativeName>
        <fullName evidence="1">rRNA (cytosine-N(4)-)-methyltransferase RsmH</fullName>
    </alternativeName>
</protein>
<feature type="chain" id="PRO_0000387057" description="Ribosomal RNA small subunit methyltransferase H">
    <location>
        <begin position="1"/>
        <end position="315"/>
    </location>
</feature>
<feature type="binding site" evidence="1">
    <location>
        <begin position="37"/>
        <end position="39"/>
    </location>
    <ligand>
        <name>S-adenosyl-L-methionine</name>
        <dbReference type="ChEBI" id="CHEBI:59789"/>
    </ligand>
</feature>
<feature type="binding site" evidence="1">
    <location>
        <position position="57"/>
    </location>
    <ligand>
        <name>S-adenosyl-L-methionine</name>
        <dbReference type="ChEBI" id="CHEBI:59789"/>
    </ligand>
</feature>
<feature type="binding site" evidence="1">
    <location>
        <position position="83"/>
    </location>
    <ligand>
        <name>S-adenosyl-L-methionine</name>
        <dbReference type="ChEBI" id="CHEBI:59789"/>
    </ligand>
</feature>
<feature type="binding site" evidence="1">
    <location>
        <position position="105"/>
    </location>
    <ligand>
        <name>S-adenosyl-L-methionine</name>
        <dbReference type="ChEBI" id="CHEBI:59789"/>
    </ligand>
</feature>
<feature type="binding site" evidence="1">
    <location>
        <position position="112"/>
    </location>
    <ligand>
        <name>S-adenosyl-L-methionine</name>
        <dbReference type="ChEBI" id="CHEBI:59789"/>
    </ligand>
</feature>
<keyword id="KW-0963">Cytoplasm</keyword>
<keyword id="KW-0489">Methyltransferase</keyword>
<keyword id="KW-0698">rRNA processing</keyword>
<keyword id="KW-0949">S-adenosyl-L-methionine</keyword>
<keyword id="KW-0808">Transferase</keyword>
<reference key="1">
    <citation type="submission" date="2008-02" db="EMBL/GenBank/DDBJ databases">
        <title>Complete sequence of Pseudomonas putida W619.</title>
        <authorList>
            <person name="Copeland A."/>
            <person name="Lucas S."/>
            <person name="Lapidus A."/>
            <person name="Barry K."/>
            <person name="Detter J.C."/>
            <person name="Glavina del Rio T."/>
            <person name="Dalin E."/>
            <person name="Tice H."/>
            <person name="Pitluck S."/>
            <person name="Chain P."/>
            <person name="Malfatti S."/>
            <person name="Shin M."/>
            <person name="Vergez L."/>
            <person name="Schmutz J."/>
            <person name="Larimer F."/>
            <person name="Land M."/>
            <person name="Hauser L."/>
            <person name="Kyrpides N."/>
            <person name="Kim E."/>
            <person name="Taghavi S."/>
            <person name="Vangronsveld D."/>
            <person name="van der Lelie D."/>
            <person name="Richardson P."/>
        </authorList>
    </citation>
    <scope>NUCLEOTIDE SEQUENCE [LARGE SCALE GENOMIC DNA]</scope>
    <source>
        <strain>W619</strain>
    </source>
</reference>